<accession>Q9FFR9</accession>
<accession>Q3E7L5</accession>
<accession>Q58P65</accession>
<feature type="chain" id="PRO_0000394988" description="Cation/H(+) antiporter 18">
    <location>
        <begin position="1"/>
        <end position="810"/>
    </location>
</feature>
<feature type="transmembrane region" description="Helical" evidence="3">
    <location>
        <begin position="29"/>
        <end position="49"/>
    </location>
</feature>
<feature type="transmembrane region" description="Helical" evidence="3">
    <location>
        <begin position="59"/>
        <end position="76"/>
    </location>
</feature>
<feature type="transmembrane region" description="Helical" evidence="3">
    <location>
        <begin position="91"/>
        <end position="111"/>
    </location>
</feature>
<feature type="transmembrane region" description="Helical" evidence="3">
    <location>
        <begin position="126"/>
        <end position="146"/>
    </location>
</feature>
<feature type="transmembrane region" description="Helical" evidence="3">
    <location>
        <begin position="157"/>
        <end position="177"/>
    </location>
</feature>
<feature type="transmembrane region" description="Helical" evidence="3">
    <location>
        <begin position="193"/>
        <end position="213"/>
    </location>
</feature>
<feature type="transmembrane region" description="Helical" evidence="3">
    <location>
        <begin position="223"/>
        <end position="243"/>
    </location>
</feature>
<feature type="transmembrane region" description="Helical" evidence="3">
    <location>
        <begin position="277"/>
        <end position="297"/>
    </location>
</feature>
<feature type="transmembrane region" description="Helical" evidence="3">
    <location>
        <begin position="314"/>
        <end position="334"/>
    </location>
</feature>
<feature type="transmembrane region" description="Helical" evidence="3">
    <location>
        <begin position="343"/>
        <end position="363"/>
    </location>
</feature>
<feature type="transmembrane region" description="Helical" evidence="3">
    <location>
        <begin position="374"/>
        <end position="394"/>
    </location>
</feature>
<feature type="transmembrane region" description="Helical" evidence="3">
    <location>
        <begin position="406"/>
        <end position="426"/>
    </location>
</feature>
<feature type="modified residue" description="Phosphoserine" evidence="2">
    <location>
        <position position="804"/>
    </location>
</feature>
<feature type="splice variant" id="VSP_039314" description="In isoform 2." evidence="5">
    <location>
        <begin position="1"/>
        <end position="68"/>
    </location>
</feature>
<gene>
    <name type="primary">CHX18</name>
    <name type="ordered locus">At5g41610</name>
    <name type="ORF">MBK23.12</name>
</gene>
<name>CHX18_ARATH</name>
<protein>
    <recommendedName>
        <fullName>Cation/H(+) antiporter 18</fullName>
    </recommendedName>
    <alternativeName>
        <fullName>Protein CATION/H+ EXCHANGER 18</fullName>
        <shortName>AtCHX18</shortName>
    </alternativeName>
</protein>
<reference key="1">
    <citation type="journal article" date="1997" name="DNA Res.">
        <title>Structural analysis of Arabidopsis thaliana chromosome 5. I. Sequence features of the 1.6 Mb regions covered by twenty physically assigned P1 clones.</title>
        <authorList>
            <person name="Sato S."/>
            <person name="Kotani H."/>
            <person name="Nakamura Y."/>
            <person name="Kaneko T."/>
            <person name="Asamizu E."/>
            <person name="Fukami M."/>
            <person name="Miyajima N."/>
            <person name="Tabata S."/>
        </authorList>
    </citation>
    <scope>NUCLEOTIDE SEQUENCE [LARGE SCALE GENOMIC DNA]</scope>
    <source>
        <strain>cv. Columbia</strain>
    </source>
</reference>
<reference key="2">
    <citation type="journal article" date="2017" name="Plant J.">
        <title>Araport11: a complete reannotation of the Arabidopsis thaliana reference genome.</title>
        <authorList>
            <person name="Cheng C.Y."/>
            <person name="Krishnakumar V."/>
            <person name="Chan A.P."/>
            <person name="Thibaud-Nissen F."/>
            <person name="Schobel S."/>
            <person name="Town C.D."/>
        </authorList>
    </citation>
    <scope>GENOME REANNOTATION</scope>
    <source>
        <strain>cv. Columbia</strain>
    </source>
</reference>
<reference key="3">
    <citation type="journal article" date="2004" name="Plant Physiol.">
        <title>Expression patterns of a novel AtCHX gene family highlight potential roles in osmotic adjustment and K+ homeostasis in pollen development.</title>
        <authorList>
            <person name="Sze H."/>
            <person name="Padmanaban S."/>
            <person name="Cellier F."/>
            <person name="Honys D."/>
            <person name="Cheng N.-H."/>
            <person name="Bock K.W."/>
            <person name="Conejero G."/>
            <person name="Li X."/>
            <person name="Twell D."/>
            <person name="Ward J.M."/>
            <person name="Hirschi K.D."/>
        </authorList>
    </citation>
    <scope>NUCLEOTIDE SEQUENCE [MRNA] OF 1-808 (ISOFORM 1)</scope>
    <scope>TISSUE SPECIFICITY</scope>
    <scope>GENE FAMILY</scope>
    <scope>NOMENCLATURE</scope>
    <source>
        <tissue>Pollen</tissue>
    </source>
</reference>
<reference key="4">
    <citation type="journal article" date="2001" name="Plant Physiol.">
        <title>Phylogenetic relationships within cation transporter families of Arabidopsis.</title>
        <authorList>
            <person name="Maeser P."/>
            <person name="Thomine S."/>
            <person name="Schroeder J.I."/>
            <person name="Ward J.M."/>
            <person name="Hirschi K."/>
            <person name="Sze H."/>
            <person name="Talke I.N."/>
            <person name="Amtmann A."/>
            <person name="Maathuis F.J.M."/>
            <person name="Sanders D."/>
            <person name="Harper J.F."/>
            <person name="Tchieu J."/>
            <person name="Gribskov M."/>
            <person name="Persans M.W."/>
            <person name="Salt D.E."/>
            <person name="Kim S.A."/>
            <person name="Guerinot M.L."/>
        </authorList>
    </citation>
    <scope>GENE FAMILY</scope>
    <scope>NOMENCLATURE</scope>
</reference>
<organism>
    <name type="scientific">Arabidopsis thaliana</name>
    <name type="common">Mouse-ear cress</name>
    <dbReference type="NCBI Taxonomy" id="3702"/>
    <lineage>
        <taxon>Eukaryota</taxon>
        <taxon>Viridiplantae</taxon>
        <taxon>Streptophyta</taxon>
        <taxon>Embryophyta</taxon>
        <taxon>Tracheophyta</taxon>
        <taxon>Spermatophyta</taxon>
        <taxon>Magnoliopsida</taxon>
        <taxon>eudicotyledons</taxon>
        <taxon>Gunneridae</taxon>
        <taxon>Pentapetalae</taxon>
        <taxon>rosids</taxon>
        <taxon>malvids</taxon>
        <taxon>Brassicales</taxon>
        <taxon>Brassicaceae</taxon>
        <taxon>Camelineae</taxon>
        <taxon>Arabidopsis</taxon>
    </lineage>
</organism>
<keyword id="KW-0025">Alternative splicing</keyword>
<keyword id="KW-0050">Antiport</keyword>
<keyword id="KW-0406">Ion transport</keyword>
<keyword id="KW-0472">Membrane</keyword>
<keyword id="KW-0597">Phosphoprotein</keyword>
<keyword id="KW-0630">Potassium</keyword>
<keyword id="KW-0633">Potassium transport</keyword>
<keyword id="KW-1185">Reference proteome</keyword>
<keyword id="KW-0812">Transmembrane</keyword>
<keyword id="KW-1133">Transmembrane helix</keyword>
<keyword id="KW-0813">Transport</keyword>
<comment type="function">
    <text evidence="1">May operate as a cation/H(+) antiporter.</text>
</comment>
<comment type="subcellular location">
    <subcellularLocation>
        <location evidence="1">Membrane</location>
        <topology evidence="1">Multi-pass membrane protein</topology>
    </subcellularLocation>
</comment>
<comment type="alternative products">
    <event type="alternative splicing"/>
    <isoform>
        <id>Q9FFR9-1</id>
        <name>1</name>
        <sequence type="displayed"/>
    </isoform>
    <isoform>
        <id>Q9FFR9-2</id>
        <name>2</name>
        <sequence type="described" ref="VSP_039314"/>
    </isoform>
</comment>
<comment type="tissue specificity">
    <text evidence="4">Expressed in roots.</text>
</comment>
<comment type="similarity">
    <text evidence="5">Belongs to the monovalent cation:proton antiporter 2 (CPA2) transporter (TC 2.A.37) family. CHX (TC 2.A.37.4) subfamily.</text>
</comment>
<dbReference type="EMBL" id="AB005233">
    <property type="protein sequence ID" value="BAB11467.1"/>
    <property type="molecule type" value="Genomic_DNA"/>
</dbReference>
<dbReference type="EMBL" id="CP002688">
    <property type="protein sequence ID" value="AED94697.1"/>
    <property type="molecule type" value="Genomic_DNA"/>
</dbReference>
<dbReference type="EMBL" id="CP002688">
    <property type="protein sequence ID" value="AED94698.1"/>
    <property type="molecule type" value="Genomic_DNA"/>
</dbReference>
<dbReference type="EMBL" id="CP002688">
    <property type="protein sequence ID" value="ANM70858.1"/>
    <property type="molecule type" value="Genomic_DNA"/>
</dbReference>
<dbReference type="EMBL" id="AY926474">
    <property type="protein sequence ID" value="AAX49546.1"/>
    <property type="molecule type" value="mRNA"/>
</dbReference>
<dbReference type="RefSeq" id="NP_001318723.1">
    <molecule id="Q9FFR9-2"/>
    <property type="nucleotide sequence ID" value="NM_001344404.1"/>
</dbReference>
<dbReference type="RefSeq" id="NP_001332436.1">
    <molecule id="Q9FFR9-1"/>
    <property type="nucleotide sequence ID" value="NM_001344405.1"/>
</dbReference>
<dbReference type="RefSeq" id="NP_198976.3">
    <molecule id="Q9FFR9-1"/>
    <property type="nucleotide sequence ID" value="NM_123525.4"/>
</dbReference>
<dbReference type="SMR" id="Q9FFR9"/>
<dbReference type="BioGRID" id="19414">
    <property type="interactions" value="4"/>
</dbReference>
<dbReference type="FunCoup" id="Q9FFR9">
    <property type="interactions" value="177"/>
</dbReference>
<dbReference type="IntAct" id="Q9FFR9">
    <property type="interactions" value="4"/>
</dbReference>
<dbReference type="STRING" id="3702.Q9FFR9"/>
<dbReference type="PaxDb" id="3702-AT5G41610.1"/>
<dbReference type="ProteomicsDB" id="246970">
    <molecule id="Q9FFR9-1"/>
</dbReference>
<dbReference type="EnsemblPlants" id="AT5G41610.1">
    <molecule id="Q9FFR9-1"/>
    <property type="protein sequence ID" value="AT5G41610.1"/>
    <property type="gene ID" value="AT5G41610"/>
</dbReference>
<dbReference type="EnsemblPlants" id="AT5G41610.2">
    <molecule id="Q9FFR9-2"/>
    <property type="protein sequence ID" value="AT5G41610.2"/>
    <property type="gene ID" value="AT5G41610"/>
</dbReference>
<dbReference type="EnsemblPlants" id="AT5G41610.3">
    <molecule id="Q9FFR9-1"/>
    <property type="protein sequence ID" value="AT5G41610.3"/>
    <property type="gene ID" value="AT5G41610"/>
</dbReference>
<dbReference type="GeneID" id="834163"/>
<dbReference type="Gramene" id="AT5G41610.1">
    <molecule id="Q9FFR9-1"/>
    <property type="protein sequence ID" value="AT5G41610.1"/>
    <property type="gene ID" value="AT5G41610"/>
</dbReference>
<dbReference type="Gramene" id="AT5G41610.2">
    <molecule id="Q9FFR9-2"/>
    <property type="protein sequence ID" value="AT5G41610.2"/>
    <property type="gene ID" value="AT5G41610"/>
</dbReference>
<dbReference type="Gramene" id="AT5G41610.3">
    <molecule id="Q9FFR9-1"/>
    <property type="protein sequence ID" value="AT5G41610.3"/>
    <property type="gene ID" value="AT5G41610"/>
</dbReference>
<dbReference type="KEGG" id="ath:AT5G41610"/>
<dbReference type="Araport" id="AT5G41610"/>
<dbReference type="TAIR" id="AT5G41610">
    <property type="gene designation" value="CHX18"/>
</dbReference>
<dbReference type="eggNOG" id="KOG1650">
    <property type="taxonomic scope" value="Eukaryota"/>
</dbReference>
<dbReference type="HOGENOM" id="CLU_005126_6_2_1"/>
<dbReference type="InParanoid" id="Q9FFR9"/>
<dbReference type="OMA" id="NFMLFTG"/>
<dbReference type="OrthoDB" id="2687058at2759"/>
<dbReference type="PhylomeDB" id="Q9FFR9"/>
<dbReference type="PRO" id="PR:Q9FFR9"/>
<dbReference type="Proteomes" id="UP000006548">
    <property type="component" value="Chromosome 5"/>
</dbReference>
<dbReference type="ExpressionAtlas" id="Q9FFR9">
    <property type="expression patterns" value="baseline and differential"/>
</dbReference>
<dbReference type="GO" id="GO:0005770">
    <property type="term" value="C:late endosome"/>
    <property type="evidence" value="ECO:0000314"/>
    <property type="project" value="TAIR"/>
</dbReference>
<dbReference type="GO" id="GO:0016020">
    <property type="term" value="C:membrane"/>
    <property type="evidence" value="ECO:0007669"/>
    <property type="project" value="UniProtKB-SubCell"/>
</dbReference>
<dbReference type="GO" id="GO:0015297">
    <property type="term" value="F:antiporter activity"/>
    <property type="evidence" value="ECO:0007669"/>
    <property type="project" value="UniProtKB-KW"/>
</dbReference>
<dbReference type="GO" id="GO:0006813">
    <property type="term" value="P:potassium ion transport"/>
    <property type="evidence" value="ECO:0007669"/>
    <property type="project" value="UniProtKB-KW"/>
</dbReference>
<dbReference type="GO" id="GO:1902600">
    <property type="term" value="P:proton transmembrane transport"/>
    <property type="evidence" value="ECO:0007669"/>
    <property type="project" value="InterPro"/>
</dbReference>
<dbReference type="GO" id="GO:0006885">
    <property type="term" value="P:regulation of pH"/>
    <property type="evidence" value="ECO:0000315"/>
    <property type="project" value="TAIR"/>
</dbReference>
<dbReference type="FunFam" id="1.20.1530.20:FF:000003">
    <property type="entry name" value="Cation/H(+) antiporter 15"/>
    <property type="match status" value="1"/>
</dbReference>
<dbReference type="Gene3D" id="1.20.1530.20">
    <property type="match status" value="1"/>
</dbReference>
<dbReference type="InterPro" id="IPR006153">
    <property type="entry name" value="Cation/H_exchanger_TM"/>
</dbReference>
<dbReference type="InterPro" id="IPR050794">
    <property type="entry name" value="CPA2_transporter"/>
</dbReference>
<dbReference type="InterPro" id="IPR038770">
    <property type="entry name" value="Na+/solute_symporter_sf"/>
</dbReference>
<dbReference type="PANTHER" id="PTHR32468">
    <property type="entry name" value="CATION/H + ANTIPORTER"/>
    <property type="match status" value="1"/>
</dbReference>
<dbReference type="PANTHER" id="PTHR32468:SF34">
    <property type="entry name" value="CATION_H(+) ANTIPORTER 18"/>
    <property type="match status" value="1"/>
</dbReference>
<dbReference type="Pfam" id="PF23256">
    <property type="entry name" value="CHX17_2nd"/>
    <property type="match status" value="1"/>
</dbReference>
<dbReference type="Pfam" id="PF23259">
    <property type="entry name" value="CHX17_C"/>
    <property type="match status" value="1"/>
</dbReference>
<dbReference type="Pfam" id="PF00999">
    <property type="entry name" value="Na_H_Exchanger"/>
    <property type="match status" value="1"/>
</dbReference>
<sequence length="810" mass="87383">MATNSTKACPAPMKATSNGVFQGDNPIDFALPLAILQIVIVIVLTRVLAYLLRPLRQPRVIAEVIGGIMLGPSLLGRSKAFLDAVFPKKSLTVLETLANLGLLFFLFLAGLEIDTKALRRTGKKALGIALAGITLPFALGIGSSFVLKATISKGVNSTAFLVFMGVALSITAFPVLARILAELKLLTTEIGRLAMSAAAVNDVAAWILLALAIALSGSNTSPLVSLWVFLSGCAFVIGASFIIPPIFRWISRRCHEGEPIEETYICATLAVVLVCGFITDAIGIHSMFGAFVVGVLIPKEGPFAGALVEKVEDLVSGLFLPLYFVASGLKTNVATIQGAQSWGLLVLVTATACFGKILGTLGVSLAFKIPMREAITLGFLMNTKGLVELIVLNIGKDRKVLNDQTFAIMVLMALFTTFITTPVVMAVYKPARRAKKEGEYKHRAVERENTNTQLRILTCFHGAGSIPSMINLLEASRGIEKGEGLCVYALHLRELSERSSAILMVHKVRKNGMPFWNRRGVNADADQVVVAFQAFQQLSRVNVRPMTAISSMSDIHEDICTTAVRKKAAIVILPFHKHQQLDGSLETTRGDYRWVNRRVLLQAPCSVGIFVDRGLGGSSQVSAQDVSYSVVVLFFGGPDDREALAYGLRMAEHPGIVLTVFRFVVSPERVGEIVNVEVSNNNNENQSVKNLKSDEEIMSEIRKISSVDESVKFVEKQIENAAVDVRSAIEEVRRSNLFLVGRMPGGEIALAIRENSECPELGPVGSLLISPESSTKASVLVIQQYNGTGIAPDLGAAETEVLTSTDKDSD</sequence>
<proteinExistence type="evidence at transcript level"/>
<evidence type="ECO:0000250" key="1"/>
<evidence type="ECO:0000250" key="2">
    <source>
        <dbReference type="UniProtKB" id="Q9SUQ7"/>
    </source>
</evidence>
<evidence type="ECO:0000255" key="3"/>
<evidence type="ECO:0000269" key="4">
    <source>
    </source>
</evidence>
<evidence type="ECO:0000305" key="5"/>